<reference key="1">
    <citation type="journal article" date="2005" name="Science">
        <title>The genome of the basidiomycetous yeast and human pathogen Cryptococcus neoformans.</title>
        <authorList>
            <person name="Loftus B.J."/>
            <person name="Fung E."/>
            <person name="Roncaglia P."/>
            <person name="Rowley D."/>
            <person name="Amedeo P."/>
            <person name="Bruno D."/>
            <person name="Vamathevan J."/>
            <person name="Miranda M."/>
            <person name="Anderson I.J."/>
            <person name="Fraser J.A."/>
            <person name="Allen J.E."/>
            <person name="Bosdet I.E."/>
            <person name="Brent M.R."/>
            <person name="Chiu R."/>
            <person name="Doering T.L."/>
            <person name="Donlin M.J."/>
            <person name="D'Souza C.A."/>
            <person name="Fox D.S."/>
            <person name="Grinberg V."/>
            <person name="Fu J."/>
            <person name="Fukushima M."/>
            <person name="Haas B.J."/>
            <person name="Huang J.C."/>
            <person name="Janbon G."/>
            <person name="Jones S.J.M."/>
            <person name="Koo H.L."/>
            <person name="Krzywinski M.I."/>
            <person name="Kwon-Chung K.J."/>
            <person name="Lengeler K.B."/>
            <person name="Maiti R."/>
            <person name="Marra M.A."/>
            <person name="Marra R.E."/>
            <person name="Mathewson C.A."/>
            <person name="Mitchell T.G."/>
            <person name="Pertea M."/>
            <person name="Riggs F.R."/>
            <person name="Salzberg S.L."/>
            <person name="Schein J.E."/>
            <person name="Shvartsbeyn A."/>
            <person name="Shin H."/>
            <person name="Shumway M."/>
            <person name="Specht C.A."/>
            <person name="Suh B.B."/>
            <person name="Tenney A."/>
            <person name="Utterback T.R."/>
            <person name="Wickes B.L."/>
            <person name="Wortman J.R."/>
            <person name="Wye N.H."/>
            <person name="Kronstad J.W."/>
            <person name="Lodge J.K."/>
            <person name="Heitman J."/>
            <person name="Davis R.W."/>
            <person name="Fraser C.M."/>
            <person name="Hyman R.W."/>
        </authorList>
    </citation>
    <scope>NUCLEOTIDE SEQUENCE [LARGE SCALE GENOMIC DNA]</scope>
    <source>
        <strain>JEC21 / ATCC MYA-565</strain>
    </source>
</reference>
<evidence type="ECO:0000250" key="1"/>
<evidence type="ECO:0000256" key="2">
    <source>
        <dbReference type="SAM" id="MobiDB-lite"/>
    </source>
</evidence>
<evidence type="ECO:0000305" key="3"/>
<dbReference type="EMBL" id="AE017341">
    <property type="protein sequence ID" value="AAW41151.1"/>
    <property type="molecule type" value="Genomic_DNA"/>
</dbReference>
<dbReference type="RefSeq" id="XP_566970.1">
    <property type="nucleotide sequence ID" value="XM_566970.1"/>
</dbReference>
<dbReference type="SMR" id="P0CR70"/>
<dbReference type="FunCoup" id="P0CR70">
    <property type="interactions" value="708"/>
</dbReference>
<dbReference type="STRING" id="214684.P0CR70"/>
<dbReference type="PaxDb" id="214684-P0CR70"/>
<dbReference type="EnsemblFungi" id="AAW41151">
    <property type="protein sequence ID" value="AAW41151"/>
    <property type="gene ID" value="CNA06210"/>
</dbReference>
<dbReference type="GeneID" id="3253679"/>
<dbReference type="KEGG" id="cne:CNA06210"/>
<dbReference type="VEuPathDB" id="FungiDB:CNA06210"/>
<dbReference type="eggNOG" id="KOG1999">
    <property type="taxonomic scope" value="Eukaryota"/>
</dbReference>
<dbReference type="HOGENOM" id="CLU_003537_1_0_1"/>
<dbReference type="InParanoid" id="P0CR70"/>
<dbReference type="OMA" id="YPVGYMN"/>
<dbReference type="OrthoDB" id="28901at2759"/>
<dbReference type="Proteomes" id="UP000002149">
    <property type="component" value="Chromosome 1"/>
</dbReference>
<dbReference type="GO" id="GO:0032044">
    <property type="term" value="C:DSIF complex"/>
    <property type="evidence" value="ECO:0000318"/>
    <property type="project" value="GO_Central"/>
</dbReference>
<dbReference type="GO" id="GO:0003729">
    <property type="term" value="F:mRNA binding"/>
    <property type="evidence" value="ECO:0000318"/>
    <property type="project" value="GO_Central"/>
</dbReference>
<dbReference type="GO" id="GO:0006397">
    <property type="term" value="P:mRNA processing"/>
    <property type="evidence" value="ECO:0007669"/>
    <property type="project" value="UniProtKB-KW"/>
</dbReference>
<dbReference type="GO" id="GO:0032784">
    <property type="term" value="P:regulation of DNA-templated transcription elongation"/>
    <property type="evidence" value="ECO:0007669"/>
    <property type="project" value="InterPro"/>
</dbReference>
<dbReference type="GO" id="GO:0006357">
    <property type="term" value="P:regulation of transcription by RNA polymerase II"/>
    <property type="evidence" value="ECO:0007669"/>
    <property type="project" value="InterPro"/>
</dbReference>
<dbReference type="GO" id="GO:0006368">
    <property type="term" value="P:transcription elongation by RNA polymerase II"/>
    <property type="evidence" value="ECO:0000318"/>
    <property type="project" value="GO_Central"/>
</dbReference>
<dbReference type="CDD" id="cd06081">
    <property type="entry name" value="KOW_Spt5_1"/>
    <property type="match status" value="1"/>
</dbReference>
<dbReference type="CDD" id="cd06082">
    <property type="entry name" value="KOW_Spt5_2"/>
    <property type="match status" value="1"/>
</dbReference>
<dbReference type="CDD" id="cd06083">
    <property type="entry name" value="KOW_Spt5_3"/>
    <property type="match status" value="1"/>
</dbReference>
<dbReference type="CDD" id="cd06084">
    <property type="entry name" value="KOW_Spt5_4"/>
    <property type="match status" value="1"/>
</dbReference>
<dbReference type="CDD" id="cd06085">
    <property type="entry name" value="KOW_Spt5_5"/>
    <property type="match status" value="1"/>
</dbReference>
<dbReference type="CDD" id="cd09888">
    <property type="entry name" value="NGN_Euk"/>
    <property type="match status" value="1"/>
</dbReference>
<dbReference type="FunFam" id="2.30.30.30:FF:000018">
    <property type="entry name" value="Transcription elongation factor SPT5"/>
    <property type="match status" value="1"/>
</dbReference>
<dbReference type="FunFam" id="2.30.30.30:FF:000029">
    <property type="entry name" value="Transcription elongation factor SPT5"/>
    <property type="match status" value="1"/>
</dbReference>
<dbReference type="FunFam" id="3.30.70.940:FF:000011">
    <property type="entry name" value="Transcription elongation factor SPT5"/>
    <property type="match status" value="1"/>
</dbReference>
<dbReference type="Gene3D" id="2.30.30.30">
    <property type="match status" value="3"/>
</dbReference>
<dbReference type="Gene3D" id="3.30.70.940">
    <property type="entry name" value="NusG, N-terminal domain"/>
    <property type="match status" value="1"/>
</dbReference>
<dbReference type="InterPro" id="IPR005824">
    <property type="entry name" value="KOW"/>
</dbReference>
<dbReference type="InterPro" id="IPR041973">
    <property type="entry name" value="KOW_Spt5_1"/>
</dbReference>
<dbReference type="InterPro" id="IPR041975">
    <property type="entry name" value="KOW_Spt5_2"/>
</dbReference>
<dbReference type="InterPro" id="IPR041976">
    <property type="entry name" value="KOW_Spt5_3"/>
</dbReference>
<dbReference type="InterPro" id="IPR041977">
    <property type="entry name" value="KOW_Spt5_4"/>
</dbReference>
<dbReference type="InterPro" id="IPR041978">
    <property type="entry name" value="KOW_Spt5_5"/>
</dbReference>
<dbReference type="InterPro" id="IPR005100">
    <property type="entry name" value="NGN-domain"/>
</dbReference>
<dbReference type="InterPro" id="IPR036735">
    <property type="entry name" value="NGN_dom_sf"/>
</dbReference>
<dbReference type="InterPro" id="IPR039385">
    <property type="entry name" value="NGN_Euk"/>
</dbReference>
<dbReference type="InterPro" id="IPR014722">
    <property type="entry name" value="Rib_uL2_dom2"/>
</dbReference>
<dbReference type="InterPro" id="IPR039659">
    <property type="entry name" value="SPT5"/>
</dbReference>
<dbReference type="InterPro" id="IPR024945">
    <property type="entry name" value="Spt5_C_dom"/>
</dbReference>
<dbReference type="InterPro" id="IPR022581">
    <property type="entry name" value="Spt5_N"/>
</dbReference>
<dbReference type="InterPro" id="IPR017071">
    <property type="entry name" value="TF_Spt5_eukaryote"/>
</dbReference>
<dbReference type="InterPro" id="IPR008991">
    <property type="entry name" value="Translation_prot_SH3-like_sf"/>
</dbReference>
<dbReference type="PANTHER" id="PTHR11125">
    <property type="entry name" value="SUPPRESSOR OF TY 5"/>
    <property type="match status" value="1"/>
</dbReference>
<dbReference type="PANTHER" id="PTHR11125:SF7">
    <property type="entry name" value="TRANSCRIPTION ELONGATION FACTOR SPT5"/>
    <property type="match status" value="1"/>
</dbReference>
<dbReference type="Pfam" id="PF12815">
    <property type="entry name" value="CTD"/>
    <property type="match status" value="1"/>
</dbReference>
<dbReference type="Pfam" id="PF23042">
    <property type="entry name" value="KOW1_SPT5"/>
    <property type="match status" value="1"/>
</dbReference>
<dbReference type="Pfam" id="PF23284">
    <property type="entry name" value="KOW2_Spt5"/>
    <property type="match status" value="1"/>
</dbReference>
<dbReference type="Pfam" id="PF23291">
    <property type="entry name" value="KOW4_SPT5"/>
    <property type="match status" value="1"/>
</dbReference>
<dbReference type="Pfam" id="PF23290">
    <property type="entry name" value="KOW5_SPT5"/>
    <property type="match status" value="1"/>
</dbReference>
<dbReference type="Pfam" id="PF23037">
    <property type="entry name" value="KOWx_SPT5"/>
    <property type="match status" value="1"/>
</dbReference>
<dbReference type="Pfam" id="PF03439">
    <property type="entry name" value="Spt5-NGN"/>
    <property type="match status" value="1"/>
</dbReference>
<dbReference type="Pfam" id="PF11942">
    <property type="entry name" value="Spt5_N"/>
    <property type="match status" value="1"/>
</dbReference>
<dbReference type="PIRSF" id="PIRSF036945">
    <property type="entry name" value="Spt5"/>
    <property type="match status" value="1"/>
</dbReference>
<dbReference type="SMART" id="SM01104">
    <property type="entry name" value="CTD"/>
    <property type="match status" value="1"/>
</dbReference>
<dbReference type="SMART" id="SM00739">
    <property type="entry name" value="KOW"/>
    <property type="match status" value="4"/>
</dbReference>
<dbReference type="SUPFAM" id="SSF50104">
    <property type="entry name" value="Translation proteins SH3-like domain"/>
    <property type="match status" value="1"/>
</dbReference>
<feature type="chain" id="PRO_0000238559" description="Transcription elongation factor SPT5">
    <location>
        <begin position="1"/>
        <end position="1152"/>
    </location>
</feature>
<feature type="region of interest" description="Disordered" evidence="2">
    <location>
        <begin position="1"/>
        <end position="104"/>
    </location>
</feature>
<feature type="region of interest" description="Disordered" evidence="2">
    <location>
        <begin position="906"/>
        <end position="966"/>
    </location>
</feature>
<feature type="compositionally biased region" description="Acidic residues" evidence="2">
    <location>
        <begin position="34"/>
        <end position="60"/>
    </location>
</feature>
<feature type="compositionally biased region" description="Acidic residues" evidence="2">
    <location>
        <begin position="68"/>
        <end position="95"/>
    </location>
</feature>
<feature type="compositionally biased region" description="Low complexity" evidence="2">
    <location>
        <begin position="939"/>
        <end position="966"/>
    </location>
</feature>
<accession>P0CR70</accession>
<accession>Q55Z86</accession>
<accession>Q5KNK1</accession>
<comment type="function">
    <text evidence="1">The SPT4-SPT5 complex mediates both activation and inhibition of transcription elongation, and plays a role in pre-mRNA processing. This complex seems to be important for the stability of the RNA polymerase II elongation machinery on the chromatin template but not for the inherent ability of this machinery to translocate down the gene (By similarity).</text>
</comment>
<comment type="subunit">
    <text evidence="1">Component of the SPT4-SPT5 complex. Interacts with RNA polymerase II (By similarity).</text>
</comment>
<comment type="subcellular location">
    <subcellularLocation>
        <location evidence="1">Nucleus</location>
    </subcellularLocation>
</comment>
<comment type="similarity">
    <text evidence="3">Belongs to the SPT5 family.</text>
</comment>
<proteinExistence type="inferred from homology"/>
<organism>
    <name type="scientific">Cryptococcus neoformans var. neoformans serotype D (strain JEC21 / ATCC MYA-565)</name>
    <name type="common">Filobasidiella neoformans</name>
    <dbReference type="NCBI Taxonomy" id="214684"/>
    <lineage>
        <taxon>Eukaryota</taxon>
        <taxon>Fungi</taxon>
        <taxon>Dikarya</taxon>
        <taxon>Basidiomycota</taxon>
        <taxon>Agaricomycotina</taxon>
        <taxon>Tremellomycetes</taxon>
        <taxon>Tremellales</taxon>
        <taxon>Cryptococcaceae</taxon>
        <taxon>Cryptococcus</taxon>
        <taxon>Cryptococcus neoformans species complex</taxon>
    </lineage>
</organism>
<sequence length="1152" mass="123917">MSDIEIKSSPPESPAEEQEERRLAGRKRARAVDPDEEDDDTQVVNNQDEEKDPKEDDGEEGGNAQAEGADEGEDDEDEDEDDDDDDEDEDDEDDDGERRAKRRRKQKKFRFLDVEAEVDDEDEEEDEDNDYGDVAEFIDEAPEDVGARDDHQHRRLNRVFGRNEEEDVHDIVQRLKERHAGAARYNGDSDAVPQRLLMPGVNDPSLWKVVVKSGREHAICASIFRKVFAQQYSANPIDVISVFCRDSIPGMIFIEARQSASVSAAVNGIVGIFMSRGVNLVPIEEMAPLLKMKKKDVNLTPGMWVRMKRGKHAGDLAQVVDVDQITSGVVGIKFIPRIDLTPREKRKERIAIGKPGGVRPPARLFAYDDVRKIYGRQSVRQGAQGSYLFDNDEYVDGFCIKDVKIPAVATEDVNPTLEEISRFTGDDDSTAKFDLSAIADANKNLSTSLLFPGDKIEVYEGEQTGLYGIVEAVSPDVIAIKAEGGEVHGQTVEVPARSVRKRFDVGEHVKVLGGKHTDASGMVVEVKGDIVTLMSDLGEQEIKVFSKDLRKAADTTNLTVTKGLYDVHDMVMLDSTTAGVVTKVEGGLLRILDQNGAAKSVSPEQVSIRRDNKRFAVATDSQGNDMKVGDNMKETDGEMRQGEVFNIFRSIFVFLYNREYTDNFGVFVARANSLISVTPKSAVNDLTKINPALNQQLPYGGASLMPAPTANLNRNRLINTLVVVTKGTSKGLIGVIKDVQGENARVELKHNNKTLSVNLASLKRKDQKTGATFPLEMAGIASAAGGYGARPNAGQYDINPYGGATAMHPSMGGQTPALMGGRTPAARFGQTPNPYAAGVQNGKTPNPYAAGVGGKTPSAANASGGKTPAWGASGGKTPAYGMASGGKTPAYGMQGGKTPNAYAMAPPGPSGGRTPAYGAYGRPEASGSRPSVMAPPSAPYSAPYSAPTPAGNGAPTPAIPGNPYTAPTPYGAPTPYAAPTPGMPSLSAPTPGPGAGIAPTPFGAPTPYGAQSYGASAQQQRGLPWDWALDFRNVIVEIGPSYRPGSRNPLHFKRGFFDGKRFGYNDIIGENVRAILLDDPSVVEEIPAEYLRPAKADSQGQVVVVIGGGPEQKGQQRTTQYENGGSWMMELEGGDMAPLVVDGADLCRIWKV</sequence>
<gene>
    <name type="primary">SPT5</name>
    <name type="ordered locus">CNA06210</name>
</gene>
<keyword id="KW-0507">mRNA processing</keyword>
<keyword id="KW-0539">Nucleus</keyword>
<keyword id="KW-1185">Reference proteome</keyword>
<keyword id="KW-0804">Transcription</keyword>
<protein>
    <recommendedName>
        <fullName>Transcription elongation factor SPT5</fullName>
    </recommendedName>
    <alternativeName>
        <fullName>Chromatin elongation factor SPT5</fullName>
    </alternativeName>
</protein>
<name>SPT5_CRYNJ</name>